<gene>
    <name evidence="1" type="primary">recA</name>
    <name type="ordered locus">LMRG_00850</name>
</gene>
<keyword id="KW-0067">ATP-binding</keyword>
<keyword id="KW-0963">Cytoplasm</keyword>
<keyword id="KW-0227">DNA damage</keyword>
<keyword id="KW-0233">DNA recombination</keyword>
<keyword id="KW-0234">DNA repair</keyword>
<keyword id="KW-0238">DNA-binding</keyword>
<keyword id="KW-0547">Nucleotide-binding</keyword>
<keyword id="KW-0742">SOS response</keyword>
<sequence length="348" mass="37994">MNDRQAALDQALKQIEKQFGKGSIMKLGEHSDQNISTISSGSLALDIALGVGGYPRGRIIEVYGPESSGKTTVALHAIAEVQAQGGTAAFIDAEHALDPAYAKNLGVNIDELLLSQPDTGEQALEIAEALVRSGAVDMLVIDSVAALVPRAEIEGEMGDAHVGLQARLMSQALRKLSGVINKSKTIAIFINQIREKVGVMFGNPEITPGGRALKFYSTVRLEVRRAEQLKQGTDVMGNKTKIKVVKNKVAPPFRIAEVDIMYGEGISREGELVDMAAEVDVINKSGSWYSYKEERIGQGRENAKQYLKEHTDIRDEISKRVREEYEIDGSSKEPLDEKEETLSLLDDE</sequence>
<accession>G2JZ14</accession>
<accession>Q9L723</accession>
<proteinExistence type="inferred from homology"/>
<comment type="function">
    <text evidence="1">Can catalyze the hydrolysis of ATP in the presence of single-stranded DNA, the ATP-dependent uptake of single-stranded DNA by duplex DNA, and the ATP-dependent hybridization of homologous single-stranded DNAs. It interacts with LexA causing its activation and leading to its autocatalytic cleavage.</text>
</comment>
<comment type="subcellular location">
    <subcellularLocation>
        <location evidence="1">Cytoplasm</location>
    </subcellularLocation>
</comment>
<comment type="similarity">
    <text evidence="1">Belongs to the RecA family.</text>
</comment>
<dbReference type="EMBL" id="AF229031">
    <property type="protein sequence ID" value="AAF61708.1"/>
    <property type="molecule type" value="Genomic_DNA"/>
</dbReference>
<dbReference type="EMBL" id="CP002002">
    <property type="protein sequence ID" value="AEO06383.1"/>
    <property type="molecule type" value="Genomic_DNA"/>
</dbReference>
<dbReference type="PIR" id="E42721">
    <property type="entry name" value="E42721"/>
</dbReference>
<dbReference type="RefSeq" id="WP_003732286.1">
    <property type="nucleotide sequence ID" value="NC_017544.1"/>
</dbReference>
<dbReference type="SMR" id="G2JZ14"/>
<dbReference type="KEGG" id="lmt:LMRG_00850"/>
<dbReference type="HOGENOM" id="CLU_040469_3_2_9"/>
<dbReference type="Proteomes" id="UP000001288">
    <property type="component" value="Chromosome"/>
</dbReference>
<dbReference type="GO" id="GO:0005829">
    <property type="term" value="C:cytosol"/>
    <property type="evidence" value="ECO:0007669"/>
    <property type="project" value="TreeGrafter"/>
</dbReference>
<dbReference type="GO" id="GO:0005524">
    <property type="term" value="F:ATP binding"/>
    <property type="evidence" value="ECO:0007669"/>
    <property type="project" value="UniProtKB-UniRule"/>
</dbReference>
<dbReference type="GO" id="GO:0016887">
    <property type="term" value="F:ATP hydrolysis activity"/>
    <property type="evidence" value="ECO:0007669"/>
    <property type="project" value="InterPro"/>
</dbReference>
<dbReference type="GO" id="GO:0140664">
    <property type="term" value="F:ATP-dependent DNA damage sensor activity"/>
    <property type="evidence" value="ECO:0007669"/>
    <property type="project" value="InterPro"/>
</dbReference>
<dbReference type="GO" id="GO:0003684">
    <property type="term" value="F:damaged DNA binding"/>
    <property type="evidence" value="ECO:0007669"/>
    <property type="project" value="UniProtKB-UniRule"/>
</dbReference>
<dbReference type="GO" id="GO:0003697">
    <property type="term" value="F:single-stranded DNA binding"/>
    <property type="evidence" value="ECO:0007669"/>
    <property type="project" value="UniProtKB-UniRule"/>
</dbReference>
<dbReference type="GO" id="GO:0006310">
    <property type="term" value="P:DNA recombination"/>
    <property type="evidence" value="ECO:0007669"/>
    <property type="project" value="UniProtKB-UniRule"/>
</dbReference>
<dbReference type="GO" id="GO:0006281">
    <property type="term" value="P:DNA repair"/>
    <property type="evidence" value="ECO:0007669"/>
    <property type="project" value="UniProtKB-UniRule"/>
</dbReference>
<dbReference type="GO" id="GO:0009432">
    <property type="term" value="P:SOS response"/>
    <property type="evidence" value="ECO:0007669"/>
    <property type="project" value="UniProtKB-UniRule"/>
</dbReference>
<dbReference type="CDD" id="cd00983">
    <property type="entry name" value="RecA"/>
    <property type="match status" value="1"/>
</dbReference>
<dbReference type="FunFam" id="3.40.50.300:FF:000087">
    <property type="entry name" value="Recombinase RecA"/>
    <property type="match status" value="1"/>
</dbReference>
<dbReference type="Gene3D" id="3.40.50.300">
    <property type="entry name" value="P-loop containing nucleotide triphosphate hydrolases"/>
    <property type="match status" value="1"/>
</dbReference>
<dbReference type="HAMAP" id="MF_00268">
    <property type="entry name" value="RecA"/>
    <property type="match status" value="1"/>
</dbReference>
<dbReference type="InterPro" id="IPR003593">
    <property type="entry name" value="AAA+_ATPase"/>
</dbReference>
<dbReference type="InterPro" id="IPR013765">
    <property type="entry name" value="DNA_recomb/repair_RecA"/>
</dbReference>
<dbReference type="InterPro" id="IPR020584">
    <property type="entry name" value="DNA_recomb/repair_RecA_CS"/>
</dbReference>
<dbReference type="InterPro" id="IPR027417">
    <property type="entry name" value="P-loop_NTPase"/>
</dbReference>
<dbReference type="InterPro" id="IPR049261">
    <property type="entry name" value="RecA-like_C"/>
</dbReference>
<dbReference type="InterPro" id="IPR049428">
    <property type="entry name" value="RecA-like_N"/>
</dbReference>
<dbReference type="InterPro" id="IPR020588">
    <property type="entry name" value="RecA_ATP-bd"/>
</dbReference>
<dbReference type="InterPro" id="IPR023400">
    <property type="entry name" value="RecA_C_sf"/>
</dbReference>
<dbReference type="InterPro" id="IPR020587">
    <property type="entry name" value="RecA_monomer-monomer_interface"/>
</dbReference>
<dbReference type="NCBIfam" id="TIGR02012">
    <property type="entry name" value="tigrfam_recA"/>
    <property type="match status" value="1"/>
</dbReference>
<dbReference type="PANTHER" id="PTHR45900:SF1">
    <property type="entry name" value="MITOCHONDRIAL DNA REPAIR PROTEIN RECA HOMOLOG-RELATED"/>
    <property type="match status" value="1"/>
</dbReference>
<dbReference type="PANTHER" id="PTHR45900">
    <property type="entry name" value="RECA"/>
    <property type="match status" value="1"/>
</dbReference>
<dbReference type="Pfam" id="PF00154">
    <property type="entry name" value="RecA"/>
    <property type="match status" value="1"/>
</dbReference>
<dbReference type="Pfam" id="PF21096">
    <property type="entry name" value="RecA_C"/>
    <property type="match status" value="1"/>
</dbReference>
<dbReference type="PRINTS" id="PR00142">
    <property type="entry name" value="RECA"/>
</dbReference>
<dbReference type="SMART" id="SM00382">
    <property type="entry name" value="AAA"/>
    <property type="match status" value="1"/>
</dbReference>
<dbReference type="SUPFAM" id="SSF52540">
    <property type="entry name" value="P-loop containing nucleoside triphosphate hydrolases"/>
    <property type="match status" value="1"/>
</dbReference>
<dbReference type="SUPFAM" id="SSF54752">
    <property type="entry name" value="RecA protein, C-terminal domain"/>
    <property type="match status" value="1"/>
</dbReference>
<dbReference type="PROSITE" id="PS00321">
    <property type="entry name" value="RECA_1"/>
    <property type="match status" value="1"/>
</dbReference>
<dbReference type="PROSITE" id="PS50162">
    <property type="entry name" value="RECA_2"/>
    <property type="match status" value="1"/>
</dbReference>
<dbReference type="PROSITE" id="PS50163">
    <property type="entry name" value="RECA_3"/>
    <property type="match status" value="1"/>
</dbReference>
<protein>
    <recommendedName>
        <fullName evidence="1">Protein RecA</fullName>
    </recommendedName>
    <alternativeName>
        <fullName evidence="1">Recombinase A</fullName>
    </alternativeName>
</protein>
<feature type="chain" id="PRO_0000419033" description="Protein RecA">
    <location>
        <begin position="1"/>
        <end position="348"/>
    </location>
</feature>
<feature type="region of interest" description="Disordered" evidence="2">
    <location>
        <begin position="325"/>
        <end position="348"/>
    </location>
</feature>
<feature type="compositionally biased region" description="Basic and acidic residues" evidence="2">
    <location>
        <begin position="325"/>
        <end position="335"/>
    </location>
</feature>
<feature type="binding site" evidence="1">
    <location>
        <begin position="64"/>
        <end position="71"/>
    </location>
    <ligand>
        <name>ATP</name>
        <dbReference type="ChEBI" id="CHEBI:30616"/>
    </ligand>
</feature>
<reference key="1">
    <citation type="submission" date="2000-01" db="EMBL/GenBank/DDBJ databases">
        <title>Construction and characterization of recA-deficient attenuated mutants of Listeria monocytogenes: cloning and sequence analysis of L. monocytogenes recA gene.</title>
        <authorList>
            <person name="Wang H.W."/>
            <person name="Lee F."/>
            <person name="Yan B.S."/>
            <person name="Shaio M.F."/>
            <person name="Kuo S.C."/>
            <person name="Wang Y.M."/>
            <person name="Yao C.W."/>
        </authorList>
    </citation>
    <scope>NUCLEOTIDE SEQUENCE [GENOMIC DNA]</scope>
    <source>
        <strain>10403S</strain>
    </source>
</reference>
<reference key="2">
    <citation type="submission" date="2010-04" db="EMBL/GenBank/DDBJ databases">
        <title>The genome sequence of Listeria monocytogenes strain 10403S.</title>
        <authorList>
            <consortium name="The Broad Institute Genome Sequencing Platform"/>
            <consortium name="The Broad Institute Genome Sequencing Center for Infectious Disease"/>
            <person name="Borowsky M."/>
            <person name="Borodovsky M."/>
            <person name="Young S.K."/>
            <person name="Zeng Q."/>
            <person name="Koehrsen M."/>
            <person name="Fitzgerald M."/>
            <person name="Wiedmann M."/>
            <person name="Swaminathan B."/>
            <person name="Lauer P."/>
            <person name="Portnoy D."/>
            <person name="Cossart P."/>
            <person name="Buchrieser C."/>
            <person name="Higgins D."/>
            <person name="Abouelleil A."/>
            <person name="Alvarado L."/>
            <person name="Arachchi H.M."/>
            <person name="Berlin A."/>
            <person name="Borenstein D."/>
            <person name="Brown A."/>
            <person name="Chapman S.B."/>
            <person name="Chen Z."/>
            <person name="Dunbar C.D."/>
            <person name="Engels R."/>
            <person name="Freedman E."/>
            <person name="Gearin G."/>
            <person name="Gellesch M."/>
            <person name="Goldberg J."/>
            <person name="Griggs A."/>
            <person name="Gujja S."/>
            <person name="Heilman E."/>
            <person name="Heiman D."/>
            <person name="Howarth C."/>
            <person name="Jen D."/>
            <person name="Larson L."/>
            <person name="Lui A."/>
            <person name="MacDonald J."/>
            <person name="Mehta T."/>
            <person name="Montmayeur A."/>
            <person name="Neiman D."/>
            <person name="Park D."/>
            <person name="Pearson M."/>
            <person name="Priest M."/>
            <person name="Richards J."/>
            <person name="Roberts A."/>
            <person name="Saif S."/>
            <person name="Shea T."/>
            <person name="Shenoy N."/>
            <person name="Sisk P."/>
            <person name="Stolte C."/>
            <person name="Sykes S."/>
            <person name="Walk T."/>
            <person name="White J."/>
            <person name="Yandava C."/>
            <person name="Haas B."/>
            <person name="Nusbaum C."/>
            <person name="Birren B."/>
        </authorList>
    </citation>
    <scope>NUCLEOTIDE SEQUENCE [LARGE SCALE GENOMIC DNA]</scope>
    <source>
        <strain>10403S</strain>
    </source>
</reference>
<name>RECA_LISM4</name>
<evidence type="ECO:0000255" key="1">
    <source>
        <dbReference type="HAMAP-Rule" id="MF_00268"/>
    </source>
</evidence>
<evidence type="ECO:0000256" key="2">
    <source>
        <dbReference type="SAM" id="MobiDB-lite"/>
    </source>
</evidence>
<organism>
    <name type="scientific">Listeria monocytogenes serotype 1/2a (strain 10403S)</name>
    <dbReference type="NCBI Taxonomy" id="393133"/>
    <lineage>
        <taxon>Bacteria</taxon>
        <taxon>Bacillati</taxon>
        <taxon>Bacillota</taxon>
        <taxon>Bacilli</taxon>
        <taxon>Bacillales</taxon>
        <taxon>Listeriaceae</taxon>
        <taxon>Listeria</taxon>
    </lineage>
</organism>